<proteinExistence type="evidence at transcript level"/>
<sequence length="625" mass="70243">MAGKKRESSLQIALSNQEQWEEALSTKGLQVVDVYQAWCGPCKPTVSLFRKIKNELGDDLLHFAVAESDTIDSLVKYRGKCEPTFLFLAGGELVAVVRGANGPLLQKTIIEQLAAEKKVLNQGSERHVIKDEVLLEEEDEIAPVQAQTEDEELVPSGKSYTVAIIKPDAVAHGKTDEIIMKIQESGFEILANEERTMTESEAREFYQHRAGEEKFQELIQFMSSGPCHILIISKSEEDEDVIPAWREFIGPTDVEIAKKEKPESLRAQYGTEVLYNAVHGSNDREQASRELAFFFPNFKISNESLKELTSVKPERTLALIRPEILKERKDEILQSIKDAGFSIAMQKEVMLTEHQVQEFYKEHINEDYYPALLKQMTSGPVLALALVKDNAVGHWRNMLGPASLSQALSEAPDSLRAQFAPSDSETNQLHGSSTTEEAKKEINFFFPVEHTLATIKPDALEEHRDEILEQIQGAGFTISQIKEANLNREMAEEFYKEHKGKPFFEQLVNYMCRGPCLMMILSKENAVHEWRSLMGPTDPAEAQKVLPDSLRGKFAKSILQNAVHGSSNSDHAMEKIKFIFGDIDLDRIVHESFGETPETSASDISRNAAAQGDDPEQDESKEMEE</sequence>
<gene>
    <name evidence="7" type="primary">nme9</name>
</gene>
<keyword id="KW-0966">Cell projection</keyword>
<keyword id="KW-0963">Cytoplasm</keyword>
<keyword id="KW-0206">Cytoskeleton</keyword>
<keyword id="KW-1185">Reference proteome</keyword>
<evidence type="ECO:0000250" key="1">
    <source>
        <dbReference type="UniProtKB" id="A0A1L1SUL6"/>
    </source>
</evidence>
<evidence type="ECO:0000250" key="2">
    <source>
        <dbReference type="UniProtKB" id="Q86XW9"/>
    </source>
</evidence>
<evidence type="ECO:0000256" key="3">
    <source>
        <dbReference type="SAM" id="MobiDB-lite"/>
    </source>
</evidence>
<evidence type="ECO:0000269" key="4">
    <source>
    </source>
</evidence>
<evidence type="ECO:0000305" key="5"/>
<evidence type="ECO:0000312" key="6">
    <source>
        <dbReference type="EMBL" id="AAH70973.1"/>
    </source>
</evidence>
<evidence type="ECO:0000312" key="7">
    <source>
        <dbReference type="Xenbase" id="XB-GENE-5862245"/>
    </source>
</evidence>
<accession>Q6IRC5</accession>
<name>TXND6_XENLA</name>
<organism evidence="6">
    <name type="scientific">Xenopus laevis</name>
    <name type="common">African clawed frog</name>
    <dbReference type="NCBI Taxonomy" id="8355"/>
    <lineage>
        <taxon>Eukaryota</taxon>
        <taxon>Metazoa</taxon>
        <taxon>Chordata</taxon>
        <taxon>Craniata</taxon>
        <taxon>Vertebrata</taxon>
        <taxon>Euteleostomi</taxon>
        <taxon>Amphibia</taxon>
        <taxon>Batrachia</taxon>
        <taxon>Anura</taxon>
        <taxon>Pipoidea</taxon>
        <taxon>Pipidae</taxon>
        <taxon>Xenopodinae</taxon>
        <taxon>Xenopus</taxon>
        <taxon>Xenopus</taxon>
    </lineage>
</organism>
<feature type="chain" id="PRO_0000452447" description="Thioredoxin domain-containing protein 6">
    <location>
        <begin position="1"/>
        <end position="625"/>
    </location>
</feature>
<feature type="region of interest" description="NDK">
    <location>
        <begin position="158"/>
        <end position="302"/>
    </location>
</feature>
<feature type="region of interest" description="Disordered" evidence="3">
    <location>
        <begin position="594"/>
        <end position="625"/>
    </location>
</feature>
<feature type="compositionally biased region" description="Acidic residues" evidence="3">
    <location>
        <begin position="613"/>
        <end position="625"/>
    </location>
</feature>
<comment type="function">
    <text evidence="2">May be a regulator of microtubule physiology.</text>
</comment>
<comment type="subunit">
    <text evidence="2">Monomer and homodimer.</text>
</comment>
<comment type="subcellular location">
    <subcellularLocation>
        <location evidence="4">Cytoplasm</location>
        <location evidence="4">Cytoskeleton</location>
        <location evidence="4">Cilium axoneme</location>
    </subcellularLocation>
    <subcellularLocation>
        <location evidence="4">Dynein axonemal particle</location>
    </subcellularLocation>
    <text evidence="1">Associated with microtubules. Detected in cilia of lung epithelium, and associated with the spermatid tail and manchette (By similarity).</text>
</comment>
<comment type="similarity">
    <text evidence="5">Belongs to the NDK family.</text>
</comment>
<reference evidence="6" key="1">
    <citation type="submission" date="2004-05" db="EMBL/GenBank/DDBJ databases">
        <authorList>
            <consortium name="NIH - Xenopus Gene Collection (XGC) project"/>
        </authorList>
    </citation>
    <scope>NUCLEOTIDE SEQUENCE [LARGE SCALE MRNA]</scope>
    <source>
        <tissue evidence="6">Embryo</tissue>
    </source>
</reference>
<reference key="2">
    <citation type="journal article" date="2020" name="Elife">
        <title>Functional partitioning of a liquid-like organelle during assembly of axonemal dyneins.</title>
        <authorList>
            <person name="Lee C."/>
            <person name="Cox R.M."/>
            <person name="Papoulas O."/>
            <person name="Horani A."/>
            <person name="Drew K."/>
            <person name="Devitt C.C."/>
            <person name="Brody S.L."/>
            <person name="Marcotte E.M."/>
            <person name="Wallingford J.B."/>
        </authorList>
    </citation>
    <scope>SUBCELLULAR LOCATION</scope>
</reference>
<dbReference type="EMBL" id="BC070973">
    <property type="protein sequence ID" value="AAH70973.1"/>
    <property type="molecule type" value="mRNA"/>
</dbReference>
<dbReference type="RefSeq" id="NP_001085047.1">
    <property type="nucleotide sequence ID" value="NM_001091578.1"/>
</dbReference>
<dbReference type="SMR" id="Q6IRC5"/>
<dbReference type="GeneID" id="432114"/>
<dbReference type="KEGG" id="xla:432114"/>
<dbReference type="AGR" id="Xenbase:XB-GENE-5862245"/>
<dbReference type="CTD" id="432114"/>
<dbReference type="Xenbase" id="XB-GENE-5862245">
    <property type="gene designation" value="nme9.L"/>
</dbReference>
<dbReference type="OrthoDB" id="10263751at2759"/>
<dbReference type="Proteomes" id="UP000186698">
    <property type="component" value="Chromosome 9_10L"/>
</dbReference>
<dbReference type="Bgee" id="432114">
    <property type="expression patterns" value="Expressed in testis and 14 other cell types or tissues"/>
</dbReference>
<dbReference type="GO" id="GO:0042995">
    <property type="term" value="C:cell projection"/>
    <property type="evidence" value="ECO:0007669"/>
    <property type="project" value="UniProtKB-KW"/>
</dbReference>
<dbReference type="GO" id="GO:0005856">
    <property type="term" value="C:cytoskeleton"/>
    <property type="evidence" value="ECO:0007669"/>
    <property type="project" value="UniProtKB-KW"/>
</dbReference>
<dbReference type="GO" id="GO:0120293">
    <property type="term" value="C:dynein axonemal particle"/>
    <property type="evidence" value="ECO:0000314"/>
    <property type="project" value="UniProtKB"/>
</dbReference>
<dbReference type="GO" id="GO:0004550">
    <property type="term" value="F:nucleoside diphosphate kinase activity"/>
    <property type="evidence" value="ECO:0007669"/>
    <property type="project" value="InterPro"/>
</dbReference>
<dbReference type="GO" id="GO:0006241">
    <property type="term" value="P:CTP biosynthetic process"/>
    <property type="evidence" value="ECO:0007669"/>
    <property type="project" value="InterPro"/>
</dbReference>
<dbReference type="GO" id="GO:0006183">
    <property type="term" value="P:GTP biosynthetic process"/>
    <property type="evidence" value="ECO:0007669"/>
    <property type="project" value="InterPro"/>
</dbReference>
<dbReference type="GO" id="GO:0006228">
    <property type="term" value="P:UTP biosynthetic process"/>
    <property type="evidence" value="ECO:0007669"/>
    <property type="project" value="InterPro"/>
</dbReference>
<dbReference type="CDD" id="cd00595">
    <property type="entry name" value="NDPk"/>
    <property type="match status" value="1"/>
</dbReference>
<dbReference type="CDD" id="cd04416">
    <property type="entry name" value="NDPk_TX"/>
    <property type="match status" value="2"/>
</dbReference>
<dbReference type="CDD" id="cd02948">
    <property type="entry name" value="TRX_NDPK"/>
    <property type="match status" value="1"/>
</dbReference>
<dbReference type="Gene3D" id="3.40.30.10">
    <property type="entry name" value="Glutaredoxin"/>
    <property type="match status" value="1"/>
</dbReference>
<dbReference type="Gene3D" id="3.30.70.141">
    <property type="entry name" value="Nucleoside diphosphate kinase-like domain"/>
    <property type="match status" value="3"/>
</dbReference>
<dbReference type="InterPro" id="IPR034907">
    <property type="entry name" value="NDK-like_dom"/>
</dbReference>
<dbReference type="InterPro" id="IPR036850">
    <property type="entry name" value="NDK-like_dom_sf"/>
</dbReference>
<dbReference type="InterPro" id="IPR001564">
    <property type="entry name" value="Nucleoside_diP_kinase"/>
</dbReference>
<dbReference type="InterPro" id="IPR036249">
    <property type="entry name" value="Thioredoxin-like_sf"/>
</dbReference>
<dbReference type="InterPro" id="IPR017937">
    <property type="entry name" value="Thioredoxin_CS"/>
</dbReference>
<dbReference type="InterPro" id="IPR013766">
    <property type="entry name" value="Thioredoxin_domain"/>
</dbReference>
<dbReference type="InterPro" id="IPR051766">
    <property type="entry name" value="TXND_domain-containing"/>
</dbReference>
<dbReference type="PANTHER" id="PTHR46135">
    <property type="entry name" value="NME/NM23 FAMILY MEMBER 8"/>
    <property type="match status" value="1"/>
</dbReference>
<dbReference type="PANTHER" id="PTHR46135:SF3">
    <property type="entry name" value="NME_NM23 FAMILY MEMBER 8"/>
    <property type="match status" value="1"/>
</dbReference>
<dbReference type="Pfam" id="PF00334">
    <property type="entry name" value="NDK"/>
    <property type="match status" value="3"/>
</dbReference>
<dbReference type="Pfam" id="PF00085">
    <property type="entry name" value="Thioredoxin"/>
    <property type="match status" value="1"/>
</dbReference>
<dbReference type="PRINTS" id="PR01243">
    <property type="entry name" value="NUCDPKINASE"/>
</dbReference>
<dbReference type="SMART" id="SM00562">
    <property type="entry name" value="NDK"/>
    <property type="match status" value="3"/>
</dbReference>
<dbReference type="SUPFAM" id="SSF54919">
    <property type="entry name" value="Nucleoside diphosphate kinase, NDK"/>
    <property type="match status" value="3"/>
</dbReference>
<dbReference type="SUPFAM" id="SSF52833">
    <property type="entry name" value="Thioredoxin-like"/>
    <property type="match status" value="1"/>
</dbReference>
<dbReference type="PROSITE" id="PS51374">
    <property type="entry name" value="NDPK_LIKE"/>
    <property type="match status" value="3"/>
</dbReference>
<dbReference type="PROSITE" id="PS00194">
    <property type="entry name" value="THIOREDOXIN_1"/>
    <property type="match status" value="1"/>
</dbReference>
<protein>
    <recommendedName>
        <fullName evidence="5">Thioredoxin domain-containing protein 6</fullName>
    </recommendedName>
    <alternativeName>
        <fullName>Thioredoxin-like protein 2</fullName>
        <shortName>Txl-2</shortName>
    </alternativeName>
</protein>